<accession>P52984</accession>
<accession>Q9CE64</accession>
<protein>
    <recommendedName>
        <fullName>Galactoside O-acetyltransferase</fullName>
        <shortName>GAT</shortName>
        <ecNumber evidence="2">2.3.1.18</ecNumber>
    </recommendedName>
    <alternativeName>
        <fullName>Thiogalactoside acetyltransferase</fullName>
    </alternativeName>
</protein>
<reference key="1">
    <citation type="journal article" date="1994" name="Biotechnol. Lett.">
        <title>The gene (lacA) encoding galactoside acetyltransferase from Lactococcus lactis.</title>
        <authorList>
            <person name="Griffin H.G."/>
            <person name="Gasson M.J."/>
        </authorList>
    </citation>
    <scope>NUCLEOTIDE SEQUENCE [GENOMIC DNA]</scope>
    <source>
        <strain>ATCC 7962</strain>
    </source>
</reference>
<reference key="2">
    <citation type="submission" date="1999-02" db="EMBL/GenBank/DDBJ databases">
        <title>The organization of genes involved in metabolism of gal/lac of Lactococcus lactis.</title>
        <authorList>
            <person name="Lee J.M."/>
            <person name="Chung D.K."/>
            <person name="Park J.H."/>
            <person name="Lee W.K."/>
            <person name="Chang H.C."/>
            <person name="Kim J.H."/>
            <person name="Lee H.J."/>
        </authorList>
    </citation>
    <scope>NUCLEOTIDE SEQUENCE [GENOMIC DNA]</scope>
    <source>
        <strain>ATCC 7962</strain>
    </source>
</reference>
<reference key="3">
    <citation type="journal article" date="2001" name="Genome Res.">
        <title>The complete genome sequence of the lactic acid bacterium Lactococcus lactis ssp. lactis IL1403.</title>
        <authorList>
            <person name="Bolotin A."/>
            <person name="Wincker P."/>
            <person name="Mauger S."/>
            <person name="Jaillon O."/>
            <person name="Malarme K."/>
            <person name="Weissenbach J."/>
            <person name="Ehrlich S.D."/>
            <person name="Sorokin A."/>
        </authorList>
    </citation>
    <scope>NUCLEOTIDE SEQUENCE [LARGE SCALE GENOMIC DNA]</scope>
    <source>
        <strain>IL1403</strain>
    </source>
</reference>
<dbReference type="EC" id="2.3.1.18" evidence="2"/>
<dbReference type="EMBL" id="X81358">
    <property type="protein sequence ID" value="CAA57126.1"/>
    <property type="molecule type" value="Genomic_DNA"/>
</dbReference>
<dbReference type="EMBL" id="U60828">
    <property type="protein sequence ID" value="AAD11503.1"/>
    <property type="molecule type" value="Genomic_DNA"/>
</dbReference>
<dbReference type="EMBL" id="AE005176">
    <property type="protein sequence ID" value="AAK06079.1"/>
    <property type="status" value="ALT_FRAME"/>
    <property type="molecule type" value="Genomic_DNA"/>
</dbReference>
<dbReference type="SMR" id="P52984"/>
<dbReference type="PaxDb" id="272623-L0026"/>
<dbReference type="EnsemblBacteria" id="AAK06079">
    <property type="protein sequence ID" value="AAK06079"/>
    <property type="gene ID" value="L0026"/>
</dbReference>
<dbReference type="KEGG" id="lla:L0026"/>
<dbReference type="eggNOG" id="COG0110">
    <property type="taxonomic scope" value="Bacteria"/>
</dbReference>
<dbReference type="HOGENOM" id="CLU_051638_7_5_9"/>
<dbReference type="Proteomes" id="UP000002196">
    <property type="component" value="Chromosome"/>
</dbReference>
<dbReference type="GO" id="GO:0005737">
    <property type="term" value="C:cytoplasm"/>
    <property type="evidence" value="ECO:0007669"/>
    <property type="project" value="UniProtKB-SubCell"/>
</dbReference>
<dbReference type="GO" id="GO:0008870">
    <property type="term" value="F:galactoside O-acetyltransferase activity"/>
    <property type="evidence" value="ECO:0007669"/>
    <property type="project" value="UniProtKB-EC"/>
</dbReference>
<dbReference type="GO" id="GO:0005989">
    <property type="term" value="P:lactose biosynthetic process"/>
    <property type="evidence" value="ECO:0007669"/>
    <property type="project" value="UniProtKB-KW"/>
</dbReference>
<dbReference type="CDD" id="cd03357">
    <property type="entry name" value="LbH_MAT_GAT"/>
    <property type="match status" value="1"/>
</dbReference>
<dbReference type="FunFam" id="2.160.10.10:FF:000025">
    <property type="entry name" value="Hexapeptide-repeat containing-acetyltransferase"/>
    <property type="match status" value="1"/>
</dbReference>
<dbReference type="Gene3D" id="2.160.10.10">
    <property type="entry name" value="Hexapeptide repeat proteins"/>
    <property type="match status" value="1"/>
</dbReference>
<dbReference type="InterPro" id="IPR001451">
    <property type="entry name" value="Hexapep"/>
</dbReference>
<dbReference type="InterPro" id="IPR018357">
    <property type="entry name" value="Hexapep_transf_CS"/>
</dbReference>
<dbReference type="InterPro" id="IPR039369">
    <property type="entry name" value="LacA-like"/>
</dbReference>
<dbReference type="InterPro" id="IPR024688">
    <property type="entry name" value="Mac_dom"/>
</dbReference>
<dbReference type="InterPro" id="IPR011004">
    <property type="entry name" value="Trimer_LpxA-like_sf"/>
</dbReference>
<dbReference type="PANTHER" id="PTHR43017:SF1">
    <property type="entry name" value="ACETYLTRANSFERASE YJL218W-RELATED"/>
    <property type="match status" value="1"/>
</dbReference>
<dbReference type="PANTHER" id="PTHR43017">
    <property type="entry name" value="GALACTOSIDE O-ACETYLTRANSFERASE"/>
    <property type="match status" value="1"/>
</dbReference>
<dbReference type="Pfam" id="PF00132">
    <property type="entry name" value="Hexapep"/>
    <property type="match status" value="1"/>
</dbReference>
<dbReference type="Pfam" id="PF12464">
    <property type="entry name" value="Mac"/>
    <property type="match status" value="1"/>
</dbReference>
<dbReference type="SMART" id="SM01266">
    <property type="entry name" value="Mac"/>
    <property type="match status" value="1"/>
</dbReference>
<dbReference type="SUPFAM" id="SSF51161">
    <property type="entry name" value="Trimeric LpxA-like enzymes"/>
    <property type="match status" value="1"/>
</dbReference>
<dbReference type="PROSITE" id="PS00101">
    <property type="entry name" value="HEXAPEP_TRANSFERASES"/>
    <property type="match status" value="1"/>
</dbReference>
<keyword id="KW-0012">Acyltransferase</keyword>
<keyword id="KW-0963">Cytoplasm</keyword>
<keyword id="KW-0422">Lactose biosynthesis</keyword>
<keyword id="KW-1185">Reference proteome</keyword>
<keyword id="KW-0677">Repeat</keyword>
<keyword id="KW-0808">Transferase</keyword>
<feature type="chain" id="PRO_0000068697" description="Galactoside O-acetyltransferase">
    <location>
        <begin position="1"/>
        <end position="207"/>
    </location>
</feature>
<feature type="active site" description="Proton donor/acceptor" evidence="2">
    <location>
        <position position="117"/>
    </location>
</feature>
<feature type="binding site" description="in other chain" evidence="2">
    <location>
        <position position="87"/>
    </location>
    <ligand>
        <name>acetyl-CoA</name>
        <dbReference type="ChEBI" id="CHEBI:57288"/>
        <note>ligand shared between dimeric partners</note>
    </ligand>
</feature>
<feature type="binding site" description="in other chain" evidence="2">
    <location>
        <position position="144"/>
    </location>
    <ligand>
        <name>acetyl-CoA</name>
        <dbReference type="ChEBI" id="CHEBI:57288"/>
        <note>ligand shared between dimeric partners</note>
    </ligand>
</feature>
<feature type="binding site" description="in other chain" evidence="2">
    <location>
        <position position="162"/>
    </location>
    <ligand>
        <name>acetyl-CoA</name>
        <dbReference type="ChEBI" id="CHEBI:57288"/>
        <note>ligand shared between dimeric partners</note>
    </ligand>
</feature>
<feature type="binding site" evidence="2">
    <location>
        <begin position="167"/>
        <end position="168"/>
    </location>
    <ligand>
        <name>acetyl-CoA</name>
        <dbReference type="ChEBI" id="CHEBI:57288"/>
        <note>ligand shared between dimeric partners</note>
    </ligand>
</feature>
<feature type="binding site" description="in other chain" evidence="2">
    <location>
        <position position="185"/>
    </location>
    <ligand>
        <name>acetyl-CoA</name>
        <dbReference type="ChEBI" id="CHEBI:57288"/>
        <note>ligand shared between dimeric partners</note>
    </ligand>
</feature>
<feature type="site" description="Transition state stabilizer" evidence="2">
    <location>
        <position position="87"/>
    </location>
</feature>
<feature type="sequence conflict" description="In Ref. 3; AAK06079." evidence="3" ref="3">
    <original>G</original>
    <variation>E</variation>
    <location>
        <position position="83"/>
    </location>
</feature>
<organism>
    <name type="scientific">Lactococcus lactis subsp. lactis (strain IL1403)</name>
    <name type="common">Streptococcus lactis</name>
    <dbReference type="NCBI Taxonomy" id="272623"/>
    <lineage>
        <taxon>Bacteria</taxon>
        <taxon>Bacillati</taxon>
        <taxon>Bacillota</taxon>
        <taxon>Bacilli</taxon>
        <taxon>Lactobacillales</taxon>
        <taxon>Streptococcaceae</taxon>
        <taxon>Lactococcus</taxon>
    </lineage>
</organism>
<proteinExistence type="inferred from homology"/>
<gene>
    <name type="primary">lacA</name>
    <name type="ordered locus">LL1981</name>
    <name type="ORF">L0026</name>
</gene>
<name>THGA_LACLA</name>
<comment type="catalytic activity">
    <reaction evidence="2">
        <text>a beta-D-galactoside + acetyl-CoA = a 6-acetyl-beta-D-galactoside + CoA</text>
        <dbReference type="Rhea" id="RHEA:15713"/>
        <dbReference type="ChEBI" id="CHEBI:28034"/>
        <dbReference type="ChEBI" id="CHEBI:28250"/>
        <dbReference type="ChEBI" id="CHEBI:57287"/>
        <dbReference type="ChEBI" id="CHEBI:57288"/>
        <dbReference type="EC" id="2.3.1.18"/>
    </reaction>
</comment>
<comment type="subunit">
    <text evidence="2">Homotrimer.</text>
</comment>
<comment type="subcellular location">
    <subcellularLocation>
        <location evidence="1">Cytoplasm</location>
    </subcellularLocation>
</comment>
<comment type="similarity">
    <text evidence="3">Belongs to the transferase hexapeptide repeat family.</text>
</comment>
<comment type="sequence caution" evidence="3">
    <conflict type="frameshift">
        <sequence resource="EMBL-CDS" id="AAK06079"/>
    </conflict>
</comment>
<sequence length="207" mass="23432">MPKLESYKRVHTEELYFPNDQKLWKEQQEALVLLEKFNQTSVTQPEQQMELLKKMFSEIGENCFIQPPFYANFGGKNVHFGTGIYANFNLTLVDDTDIFVGNHVMFGPNVTIDTATHPVSPDLRKRGAQYNKKVYIEENVWLGAGVIVLPGVRIGKNSVIGAGSLVTKDIPDNVVAFGTPCMVKRKINDSDFKTYDHGKKIDLDEFI</sequence>
<evidence type="ECO:0000250" key="1"/>
<evidence type="ECO:0000250" key="2">
    <source>
        <dbReference type="UniProtKB" id="P07464"/>
    </source>
</evidence>
<evidence type="ECO:0000305" key="3"/>